<dbReference type="EMBL" id="BC146145">
    <property type="protein sequence ID" value="AAI46146.1"/>
    <property type="molecule type" value="mRNA"/>
</dbReference>
<dbReference type="RefSeq" id="NP_001092623.1">
    <property type="nucleotide sequence ID" value="NM_001099153.2"/>
</dbReference>
<dbReference type="SMR" id="A6H779"/>
<dbReference type="FunCoup" id="A6H779">
    <property type="interactions" value="107"/>
</dbReference>
<dbReference type="STRING" id="9913.ENSBTAP00000060031"/>
<dbReference type="PaxDb" id="9913-ENSBTAP00000005160"/>
<dbReference type="Ensembl" id="ENSBTAT00000005160.6">
    <property type="protein sequence ID" value="ENSBTAP00000005160.5"/>
    <property type="gene ID" value="ENSBTAG00000003952.7"/>
</dbReference>
<dbReference type="GeneID" id="616212"/>
<dbReference type="KEGG" id="bta:616212"/>
<dbReference type="CTD" id="25827"/>
<dbReference type="VEuPathDB" id="HostDB:ENSBTAG00000003952"/>
<dbReference type="VGNC" id="VGNC:52775">
    <property type="gene designation" value="FBXL2"/>
</dbReference>
<dbReference type="eggNOG" id="KOG4341">
    <property type="taxonomic scope" value="Eukaryota"/>
</dbReference>
<dbReference type="GeneTree" id="ENSGT00940000153845"/>
<dbReference type="HOGENOM" id="CLU_016072_7_1_1"/>
<dbReference type="InParanoid" id="A6H779"/>
<dbReference type="OMA" id="LGCPQME"/>
<dbReference type="OrthoDB" id="550575at2759"/>
<dbReference type="TreeFam" id="TF313434"/>
<dbReference type="UniPathway" id="UPA00143"/>
<dbReference type="Proteomes" id="UP000009136">
    <property type="component" value="Chromosome 22"/>
</dbReference>
<dbReference type="Bgee" id="ENSBTAG00000003952">
    <property type="expression patterns" value="Expressed in semen and 110 other cell types or tissues"/>
</dbReference>
<dbReference type="GO" id="GO:0016020">
    <property type="term" value="C:membrane"/>
    <property type="evidence" value="ECO:0000250"/>
    <property type="project" value="UniProtKB"/>
</dbReference>
<dbReference type="GO" id="GO:0019005">
    <property type="term" value="C:SCF ubiquitin ligase complex"/>
    <property type="evidence" value="ECO:0000250"/>
    <property type="project" value="UniProtKB"/>
</dbReference>
<dbReference type="GO" id="GO:0005516">
    <property type="term" value="F:calmodulin binding"/>
    <property type="evidence" value="ECO:0007669"/>
    <property type="project" value="UniProtKB-KW"/>
</dbReference>
<dbReference type="GO" id="GO:0036312">
    <property type="term" value="F:phosphatidylinositol 3-kinase regulatory subunit binding"/>
    <property type="evidence" value="ECO:0007669"/>
    <property type="project" value="Ensembl"/>
</dbReference>
<dbReference type="GO" id="GO:0019903">
    <property type="term" value="F:protein phosphatase binding"/>
    <property type="evidence" value="ECO:0007669"/>
    <property type="project" value="Ensembl"/>
</dbReference>
<dbReference type="GO" id="GO:1990756">
    <property type="term" value="F:ubiquitin-like ligase-substrate adaptor activity"/>
    <property type="evidence" value="ECO:0000250"/>
    <property type="project" value="UniProtKB"/>
</dbReference>
<dbReference type="GO" id="GO:0044830">
    <property type="term" value="P:modulation by host of viral RNA genome replication"/>
    <property type="evidence" value="ECO:0007669"/>
    <property type="project" value="Ensembl"/>
</dbReference>
<dbReference type="GO" id="GO:1900226">
    <property type="term" value="P:negative regulation of NLRP3 inflammasome complex assembly"/>
    <property type="evidence" value="ECO:0000250"/>
    <property type="project" value="UniProtKB"/>
</dbReference>
<dbReference type="GO" id="GO:0006513">
    <property type="term" value="P:protein monoubiquitination"/>
    <property type="evidence" value="ECO:0007669"/>
    <property type="project" value="Ensembl"/>
</dbReference>
<dbReference type="GO" id="GO:0016567">
    <property type="term" value="P:protein ubiquitination"/>
    <property type="evidence" value="ECO:0000250"/>
    <property type="project" value="UniProtKB"/>
</dbReference>
<dbReference type="GO" id="GO:0010506">
    <property type="term" value="P:regulation of autophagy"/>
    <property type="evidence" value="ECO:0000250"/>
    <property type="project" value="UniProtKB"/>
</dbReference>
<dbReference type="GO" id="GO:0050727">
    <property type="term" value="P:regulation of inflammatory response"/>
    <property type="evidence" value="ECO:0000250"/>
    <property type="project" value="UniProtKB"/>
</dbReference>
<dbReference type="GO" id="GO:0051896">
    <property type="term" value="P:regulation of phosphatidylinositol 3-kinase/protein kinase B signal transduction"/>
    <property type="evidence" value="ECO:0000250"/>
    <property type="project" value="UniProtKB"/>
</dbReference>
<dbReference type="GO" id="GO:0031146">
    <property type="term" value="P:SCF-dependent proteasomal ubiquitin-dependent protein catabolic process"/>
    <property type="evidence" value="ECO:0000250"/>
    <property type="project" value="UniProtKB"/>
</dbReference>
<dbReference type="CDD" id="cd22115">
    <property type="entry name" value="F-box_FBXL2-like"/>
    <property type="match status" value="1"/>
</dbReference>
<dbReference type="FunFam" id="3.80.10.10:FF:000042">
    <property type="entry name" value="F-box/LRR-repeat protein 20 isoform 2"/>
    <property type="match status" value="1"/>
</dbReference>
<dbReference type="FunFam" id="3.80.10.10:FF:000060">
    <property type="entry name" value="F-box/LRR-repeat protein 20 isoform 2"/>
    <property type="match status" value="1"/>
</dbReference>
<dbReference type="FunFam" id="1.20.1280.50:FF:000013">
    <property type="entry name" value="F-box/LRR-repeat protein 20 isoform X1"/>
    <property type="match status" value="1"/>
</dbReference>
<dbReference type="Gene3D" id="3.80.10.10">
    <property type="entry name" value="Ribonuclease Inhibitor"/>
    <property type="match status" value="2"/>
</dbReference>
<dbReference type="InterPro" id="IPR001810">
    <property type="entry name" value="F-box_dom"/>
</dbReference>
<dbReference type="InterPro" id="IPR001611">
    <property type="entry name" value="Leu-rich_rpt"/>
</dbReference>
<dbReference type="InterPro" id="IPR006553">
    <property type="entry name" value="Leu-rich_rpt_Cys-con_subtyp"/>
</dbReference>
<dbReference type="InterPro" id="IPR032675">
    <property type="entry name" value="LRR_dom_sf"/>
</dbReference>
<dbReference type="PANTHER" id="PTHR13318:SF95">
    <property type="entry name" value="F-BOX PROTEIN YLR352W"/>
    <property type="match status" value="1"/>
</dbReference>
<dbReference type="PANTHER" id="PTHR13318">
    <property type="entry name" value="PARTNER OF PAIRED, ISOFORM B-RELATED"/>
    <property type="match status" value="1"/>
</dbReference>
<dbReference type="Pfam" id="PF12937">
    <property type="entry name" value="F-box-like"/>
    <property type="match status" value="1"/>
</dbReference>
<dbReference type="Pfam" id="PF13516">
    <property type="entry name" value="LRR_6"/>
    <property type="match status" value="5"/>
</dbReference>
<dbReference type="SMART" id="SM00256">
    <property type="entry name" value="FBOX"/>
    <property type="match status" value="1"/>
</dbReference>
<dbReference type="SMART" id="SM00367">
    <property type="entry name" value="LRR_CC"/>
    <property type="match status" value="11"/>
</dbReference>
<dbReference type="SUPFAM" id="SSF52047">
    <property type="entry name" value="RNI-like"/>
    <property type="match status" value="1"/>
</dbReference>
<dbReference type="PROSITE" id="PS50181">
    <property type="entry name" value="FBOX"/>
    <property type="match status" value="1"/>
</dbReference>
<keyword id="KW-0106">Calcium</keyword>
<keyword id="KW-0112">Calmodulin-binding</keyword>
<keyword id="KW-1017">Isopeptide bond</keyword>
<keyword id="KW-0433">Leucine-rich repeat</keyword>
<keyword id="KW-0449">Lipoprotein</keyword>
<keyword id="KW-0472">Membrane</keyword>
<keyword id="KW-0597">Phosphoprotein</keyword>
<keyword id="KW-0636">Prenylation</keyword>
<keyword id="KW-1185">Reference proteome</keyword>
<keyword id="KW-0677">Repeat</keyword>
<keyword id="KW-0832">Ubl conjugation</keyword>
<keyword id="KW-0833">Ubl conjugation pathway</keyword>
<protein>
    <recommendedName>
        <fullName evidence="4">F-box/LRR-repeat protein 2</fullName>
    </recommendedName>
    <alternativeName>
        <fullName evidence="4">F-box and leucine-rich repeat protein 2</fullName>
    </alternativeName>
</protein>
<name>FBXL2_BOVIN</name>
<evidence type="ECO:0000250" key="1">
    <source>
        <dbReference type="UniProtKB" id="Q8BH16"/>
    </source>
</evidence>
<evidence type="ECO:0000250" key="2">
    <source>
        <dbReference type="UniProtKB" id="Q9UKC9"/>
    </source>
</evidence>
<evidence type="ECO:0000255" key="3">
    <source>
        <dbReference type="PROSITE-ProRule" id="PRU00080"/>
    </source>
</evidence>
<evidence type="ECO:0000305" key="4"/>
<comment type="function">
    <text evidence="1 2">Calcium-activated substrate recognition component of the SCF (SKP1-cullin-F-box protein) E3 ubiquitin-protein ligase complex, SCF(FBXL2), which mediates the ubiquitination and subsequent proteasomal degradation of target proteins (By similarity). Unlike many F-box proteins, FBXL2 does not seem to target phosphodegron within its substrates but rather calmodulin-binding motifs and is thereby antagonized by calmodulin. This is the case for the cyclins CCND2 and CCND3 which polyubiquitination and subsequent degradation are inhibited by calmodulin. Through CCND2 and CCND3 degradation induces cell-cycle arrest in G(0). SCF(FBXL2) also mediates PIK3R2 ubiquitination and proteasomal degradation thereby regulating phosphatidylinositol 3-kinase signaling and autophagy (By similarity). PCYT1A monoubiquitination by SCF(FBXL2) and subsequent degradation regulates synthesis of phosphatidylcholine, which is utilized for formation of membranes and of pulmonary surfactant. The SCF(FBXL2) complex acts as a regulator of inflammation by mediating ubiquitination and degradation of TRAF proteins (TRAF1, TRAF2, TRAF3, TRAF4, TRAF5 and TRAF6) (By similarity). The SCF(FBXL2) complex acts as a negative regulator of the NLRP3 inflammasome by mediating ubiquitination and degradation of NLRP3 (By similarity).</text>
</comment>
<comment type="pathway">
    <text evidence="2">Protein modification; protein ubiquitination.</text>
</comment>
<comment type="subunit">
    <text evidence="2">Part of the SCF (SKP1-CUL1-F-box) E3 ubiquitin-protein ligase complex SCF(FBXL2) composed of CUL1, SKP1, RBX1 and FBXL2. Interacts with calmodulin; may antagonize substrate ubiquitination by SCF(FBXL2). May interact with PIK3R1. Interacts with PTPN13.</text>
</comment>
<comment type="subcellular location">
    <subcellularLocation>
        <location evidence="2">Membrane</location>
        <topology evidence="2">Lipid-anchor</topology>
    </subcellularLocation>
</comment>
<comment type="domain">
    <text evidence="2">The CAAX motif is a signal for the geranylgeranylation of FBXL2 and is required for its association with cell membranes and the recruitment of substrates to the active SCF(FBXL2) complex.</text>
</comment>
<comment type="PTM">
    <text evidence="1">Phosphorylated by GSK-beta (GSK3B), promoting recognition by FBXO3, leading to its ubiquitination by the SCF(FBXO3) complex.</text>
</comment>
<comment type="PTM">
    <text evidence="1">Ubiquitinated at Lys-201 by the SCF(FBXO3) complex in response to lipopolysaccharide (LPS), leading to its degradation by the proteasome.</text>
</comment>
<reference key="1">
    <citation type="submission" date="2007-06" db="EMBL/GenBank/DDBJ databases">
        <authorList>
            <consortium name="NIH - Mammalian Gene Collection (MGC) project"/>
        </authorList>
    </citation>
    <scope>NUCLEOTIDE SEQUENCE [LARGE SCALE MRNA]</scope>
    <source>
        <strain>Hereford</strain>
        <tissue>Fetal pons</tissue>
    </source>
</reference>
<proteinExistence type="evidence at transcript level"/>
<sequence>MVFSNNDEGLINKKLPKELLLRIFSFLDIVTLCRCAQISKAWNILALDGSNWQRIDLFNFQTDVEGRVVENISKRCGGFLRKLSLRGCIGVGDSSLKTFAQNCRNIEHLNLNGCTKITDSTCYSLSRFCSKLKHLDLTSCVSITNSSLKGISEGCRHLEYLNLSWCDQITKDGVEALVRGCRGLRALLLRGCTQLEDEALKHIQNYCHELVSLNLQSCSRVTDDGVVQLCRGCPRLQALCLSGCGSLTDASLTALALNCPRLQILEAARCSHLTDAGFTLLARNCHDLEKMDLEECILITDRTLTQLSIHCPKLQALSLSHCELITDDGILHLSNSPCGHERLRVLELDNCLLITDVALEHLEHCRGLERLELYDCQQVTRAGIKRMRAQLPHVRVHAYFAPVTPPTAAGGGGPRLCRCCVIL</sequence>
<feature type="chain" id="PRO_0000354084" description="F-box/LRR-repeat protein 2">
    <location>
        <begin position="1"/>
        <end position="423"/>
    </location>
</feature>
<feature type="domain" description="F-box" evidence="3">
    <location>
        <begin position="9"/>
        <end position="55"/>
    </location>
</feature>
<feature type="repeat" description="LRR 1">
    <location>
        <begin position="61"/>
        <end position="87"/>
    </location>
</feature>
<feature type="repeat" description="LRR 2">
    <location>
        <begin position="88"/>
        <end position="113"/>
    </location>
</feature>
<feature type="repeat" description="LRR 3">
    <location>
        <begin position="114"/>
        <end position="139"/>
    </location>
</feature>
<feature type="repeat" description="LRR 4">
    <location>
        <begin position="140"/>
        <end position="165"/>
    </location>
</feature>
<feature type="repeat" description="LRR 5">
    <location>
        <begin position="166"/>
        <end position="191"/>
    </location>
</feature>
<feature type="repeat" description="LRR 6">
    <location>
        <begin position="192"/>
        <end position="217"/>
    </location>
</feature>
<feature type="repeat" description="LRR 7">
    <location>
        <begin position="218"/>
        <end position="243"/>
    </location>
</feature>
<feature type="repeat" description="LRR 8">
    <location>
        <begin position="244"/>
        <end position="269"/>
    </location>
</feature>
<feature type="repeat" description="LRR 9">
    <location>
        <begin position="270"/>
        <end position="295"/>
    </location>
</feature>
<feature type="repeat" description="LRR 10">
    <location>
        <begin position="296"/>
        <end position="321"/>
    </location>
</feature>
<feature type="repeat" description="LRR 11">
    <location>
        <begin position="322"/>
        <end position="350"/>
    </location>
</feature>
<feature type="repeat" description="LRR 12">
    <location>
        <begin position="351"/>
        <end position="375"/>
    </location>
</feature>
<feature type="repeat" description="LRR 13">
    <location>
        <begin position="376"/>
        <end position="401"/>
    </location>
</feature>
<feature type="region of interest" description="Interaction with Calmodulin" evidence="1">
    <location>
        <begin position="80"/>
        <end position="90"/>
    </location>
</feature>
<feature type="short sequence motif" description="CAAX motif">
    <location>
        <begin position="420"/>
        <end position="423"/>
    </location>
</feature>
<feature type="modified residue" description="Phosphothreonine" evidence="1">
    <location>
        <position position="404"/>
    </location>
</feature>
<feature type="lipid moiety-binding region" description="S-geranylgeranyl cysteine" evidence="2">
    <location>
        <position position="420"/>
    </location>
</feature>
<feature type="cross-link" description="Glycyl lysine isopeptide (Lys-Gly) (interchain with G-Cter in ubiquitin)" evidence="1">
    <location>
        <position position="201"/>
    </location>
</feature>
<gene>
    <name evidence="4" type="primary">FBXL2</name>
</gene>
<organism>
    <name type="scientific">Bos taurus</name>
    <name type="common">Bovine</name>
    <dbReference type="NCBI Taxonomy" id="9913"/>
    <lineage>
        <taxon>Eukaryota</taxon>
        <taxon>Metazoa</taxon>
        <taxon>Chordata</taxon>
        <taxon>Craniata</taxon>
        <taxon>Vertebrata</taxon>
        <taxon>Euteleostomi</taxon>
        <taxon>Mammalia</taxon>
        <taxon>Eutheria</taxon>
        <taxon>Laurasiatheria</taxon>
        <taxon>Artiodactyla</taxon>
        <taxon>Ruminantia</taxon>
        <taxon>Pecora</taxon>
        <taxon>Bovidae</taxon>
        <taxon>Bovinae</taxon>
        <taxon>Bos</taxon>
    </lineage>
</organism>
<accession>A6H779</accession>